<organism>
    <name type="scientific">Chlamydia pneumoniae</name>
    <name type="common">Chlamydophila pneumoniae</name>
    <dbReference type="NCBI Taxonomy" id="83558"/>
    <lineage>
        <taxon>Bacteria</taxon>
        <taxon>Pseudomonadati</taxon>
        <taxon>Chlamydiota</taxon>
        <taxon>Chlamydiia</taxon>
        <taxon>Chlamydiales</taxon>
        <taxon>Chlamydiaceae</taxon>
        <taxon>Chlamydia/Chlamydophila group</taxon>
        <taxon>Chlamydia</taxon>
    </lineage>
</organism>
<proteinExistence type="inferred from homology"/>
<keyword id="KW-0998">Cell outer membrane</keyword>
<keyword id="KW-0406">Ion transport</keyword>
<keyword id="KW-0472">Membrane</keyword>
<keyword id="KW-0626">Porin</keyword>
<keyword id="KW-0732">Signal</keyword>
<keyword id="KW-0812">Transmembrane</keyword>
<keyword id="KW-1134">Transmembrane beta strand</keyword>
<keyword id="KW-0813">Transport</keyword>
<gene>
    <name type="primary">ompB</name>
    <name type="synonym">porB</name>
    <name type="ordered locus">CPn_0854</name>
    <name type="ordered locus">CP_1015</name>
    <name type="ordered locus">CpB0883</name>
</gene>
<comment type="subcellular location">
    <subcellularLocation>
        <location evidence="2">Cell outer membrane</location>
        <topology evidence="2">Multi-pass membrane protein</topology>
    </subcellularLocation>
</comment>
<comment type="similarity">
    <text evidence="2">Belongs to the chlamydial OMP family.</text>
</comment>
<comment type="sequence caution" evidence="2">
    <conflict type="erroneous initiation">
        <sequence resource="EMBL-CDS" id="AAP98812"/>
    </conflict>
</comment>
<dbReference type="EMBL" id="AE001363">
    <property type="protein sequence ID" value="AAD18992.1"/>
    <property type="molecule type" value="Genomic_DNA"/>
</dbReference>
<dbReference type="EMBL" id="AE002161">
    <property type="protein sequence ID" value="AAF38793.1"/>
    <property type="molecule type" value="Genomic_DNA"/>
</dbReference>
<dbReference type="EMBL" id="BA000008">
    <property type="protein sequence ID" value="BAA99062.1"/>
    <property type="molecule type" value="Genomic_DNA"/>
</dbReference>
<dbReference type="EMBL" id="AE009440">
    <property type="protein sequence ID" value="AAP98812.1"/>
    <property type="status" value="ALT_INIT"/>
    <property type="molecule type" value="Genomic_DNA"/>
</dbReference>
<dbReference type="PIR" id="D86597">
    <property type="entry name" value="D86597"/>
</dbReference>
<dbReference type="PIR" id="H72027">
    <property type="entry name" value="H72027"/>
</dbReference>
<dbReference type="RefSeq" id="NP_225049.1">
    <property type="nucleotide sequence ID" value="NC_000922.1"/>
</dbReference>
<dbReference type="RefSeq" id="WP_010883489.1">
    <property type="nucleotide sequence ID" value="NZ_LN847257.1"/>
</dbReference>
<dbReference type="STRING" id="406984.CPK_ORF00259"/>
<dbReference type="GeneID" id="45050907"/>
<dbReference type="KEGG" id="cpa:CP_1015"/>
<dbReference type="KEGG" id="cpj:ompB"/>
<dbReference type="KEGG" id="cpn:CPn_0854"/>
<dbReference type="KEGG" id="cpt:CpB0883"/>
<dbReference type="PATRIC" id="fig|115713.3.peg.934"/>
<dbReference type="HOGENOM" id="CLU_815590_0_0_0"/>
<dbReference type="OrthoDB" id="17228at2"/>
<dbReference type="Proteomes" id="UP000000583">
    <property type="component" value="Chromosome"/>
</dbReference>
<dbReference type="Proteomes" id="UP000000801">
    <property type="component" value="Chromosome"/>
</dbReference>
<dbReference type="GO" id="GO:0009279">
    <property type="term" value="C:cell outer membrane"/>
    <property type="evidence" value="ECO:0007669"/>
    <property type="project" value="UniProtKB-SubCell"/>
</dbReference>
<dbReference type="GO" id="GO:0046930">
    <property type="term" value="C:pore complex"/>
    <property type="evidence" value="ECO:0007669"/>
    <property type="project" value="UniProtKB-KW"/>
</dbReference>
<dbReference type="GO" id="GO:0020003">
    <property type="term" value="C:symbiont-containing vacuole"/>
    <property type="evidence" value="ECO:0000314"/>
    <property type="project" value="CAFA"/>
</dbReference>
<dbReference type="GO" id="GO:0015288">
    <property type="term" value="F:porin activity"/>
    <property type="evidence" value="ECO:0007669"/>
    <property type="project" value="UniProtKB-KW"/>
</dbReference>
<dbReference type="GO" id="GO:0006811">
    <property type="term" value="P:monoatomic ion transport"/>
    <property type="evidence" value="ECO:0007669"/>
    <property type="project" value="UniProtKB-KW"/>
</dbReference>
<feature type="signal peptide" evidence="1">
    <location>
        <begin position="1"/>
        <end position="30"/>
    </location>
</feature>
<feature type="chain" id="PRO_0000020155" description="Outer membrane protein B">
    <location>
        <begin position="31"/>
        <end position="344"/>
    </location>
</feature>
<accession>Q9Z752</accession>
<accession>Q9JQE2</accession>
<sequence length="344" mass="37734">MNSKMLKHLRLATLSFSMFFGIVSSPAVYALGAGNPAAPVLPGVNPEQTGWCAFQLCNSYDLFAALAGSLKFGFYGDYVFSESAHITNVPVITSVTTSGTGTTPTITSTTKNVDFDLNNSSISSSCVFATIALQETSPAAIPLLDIAFTARVGGLKQYYRLPLNAYRDFTSNPLNAESEVTDGLIEVQSDYGIVWGLSLQKVLWKDGVSFVGVSADYRHGSSPINYIIVYNKANPEIYFDATDGNLSYKEWSASIGISTYLNDYVLPYASVSIGNTSRKAPSDSFTELEKQFTNFKFKIRKITNFDRVNFCFGTTCCISNNFYYSVEGRWGYQRAINITSGLQF</sequence>
<evidence type="ECO:0000255" key="1"/>
<evidence type="ECO:0000305" key="2"/>
<protein>
    <recommendedName>
        <fullName>Outer membrane protein B</fullName>
    </recommendedName>
</protein>
<reference key="1">
    <citation type="journal article" date="1999" name="Nat. Genet.">
        <title>Comparative genomes of Chlamydia pneumoniae and C. trachomatis.</title>
        <authorList>
            <person name="Kalman S."/>
            <person name="Mitchell W.P."/>
            <person name="Marathe R."/>
            <person name="Lammel C.J."/>
            <person name="Fan J."/>
            <person name="Hyman R.W."/>
            <person name="Olinger L."/>
            <person name="Grimwood J."/>
            <person name="Davis R.W."/>
            <person name="Stephens R.S."/>
        </authorList>
    </citation>
    <scope>NUCLEOTIDE SEQUENCE [LARGE SCALE GENOMIC DNA]</scope>
    <source>
        <strain>CWL029</strain>
    </source>
</reference>
<reference key="2">
    <citation type="journal article" date="2000" name="Nucleic Acids Res.">
        <title>Genome sequences of Chlamydia trachomatis MoPn and Chlamydia pneumoniae AR39.</title>
        <authorList>
            <person name="Read T.D."/>
            <person name="Brunham R.C."/>
            <person name="Shen C."/>
            <person name="Gill S.R."/>
            <person name="Heidelberg J.F."/>
            <person name="White O."/>
            <person name="Hickey E.K."/>
            <person name="Peterson J.D."/>
            <person name="Utterback T.R."/>
            <person name="Berry K.J."/>
            <person name="Bass S."/>
            <person name="Linher K.D."/>
            <person name="Weidman J.F."/>
            <person name="Khouri H.M."/>
            <person name="Craven B."/>
            <person name="Bowman C."/>
            <person name="Dodson R.J."/>
            <person name="Gwinn M.L."/>
            <person name="Nelson W.C."/>
            <person name="DeBoy R.T."/>
            <person name="Kolonay J.F."/>
            <person name="McClarty G."/>
            <person name="Salzberg S.L."/>
            <person name="Eisen J.A."/>
            <person name="Fraser C.M."/>
        </authorList>
    </citation>
    <scope>NUCLEOTIDE SEQUENCE [LARGE SCALE GENOMIC DNA]</scope>
    <source>
        <strain>AR39</strain>
    </source>
</reference>
<reference key="3">
    <citation type="journal article" date="2000" name="Nucleic Acids Res.">
        <title>Comparison of whole genome sequences of Chlamydia pneumoniae J138 from Japan and CWL029 from USA.</title>
        <authorList>
            <person name="Shirai M."/>
            <person name="Hirakawa H."/>
            <person name="Kimoto M."/>
            <person name="Tabuchi M."/>
            <person name="Kishi F."/>
            <person name="Ouchi K."/>
            <person name="Shiba T."/>
            <person name="Ishii K."/>
            <person name="Hattori M."/>
            <person name="Kuhara S."/>
            <person name="Nakazawa T."/>
        </authorList>
    </citation>
    <scope>NUCLEOTIDE SEQUENCE [LARGE SCALE GENOMIC DNA]</scope>
    <source>
        <strain>J138</strain>
    </source>
</reference>
<reference key="4">
    <citation type="journal article" date="2000" name="J. Infect. Dis. 181 Suppl.">
        <title>Comparison of outer membrane protein genes omp and pmp in the whole genome sequences of Chlamydia pneumoniae isolates from Japan and the United States.</title>
        <authorList>
            <person name="Shirai M."/>
            <person name="Hirakawa H."/>
            <person name="Ouchi K."/>
            <person name="Tabuchi M."/>
            <person name="Kishi F."/>
            <person name="Kimoto M."/>
            <person name="Takeuchi H."/>
            <person name="Nishida J."/>
            <person name="Shibata K."/>
            <person name="Fujinaga R."/>
            <person name="Yoneda H."/>
            <person name="Matsushima H."/>
            <person name="Tanaka C."/>
            <person name="Furukawa S."/>
            <person name="Miura K."/>
            <person name="Nakazawa A."/>
            <person name="Ishii K."/>
            <person name="Shiba T."/>
            <person name="Hattori M."/>
            <person name="Kuhara S."/>
            <person name="Nakazawa T."/>
        </authorList>
    </citation>
    <scope>NUCLEOTIDE SEQUENCE [GENOMIC DNA]</scope>
    <source>
        <strain>J138</strain>
    </source>
</reference>
<reference key="5">
    <citation type="submission" date="2002-05" db="EMBL/GenBank/DDBJ databases">
        <title>The genome sequence of Chlamydia pneumoniae TW183 and comparison with other Chlamydia strains based on whole genome sequence analysis.</title>
        <authorList>
            <person name="Geng M.M."/>
            <person name="Schuhmacher A."/>
            <person name="Muehldorfer I."/>
            <person name="Bensch K.W."/>
            <person name="Schaefer K.P."/>
            <person name="Schneider S."/>
            <person name="Pohl T."/>
            <person name="Essig A."/>
            <person name="Marre R."/>
            <person name="Melchers K."/>
        </authorList>
    </citation>
    <scope>NUCLEOTIDE SEQUENCE [LARGE SCALE GENOMIC DNA]</scope>
    <source>
        <strain>TW-183</strain>
    </source>
</reference>
<name>OMP2_CHLPN</name>